<gene>
    <name type="primary">LIP2</name>
</gene>
<keyword id="KW-0002">3D-structure</keyword>
<keyword id="KW-1015">Disulfide bond</keyword>
<keyword id="KW-0325">Glycoprotein</keyword>
<keyword id="KW-0378">Hydrolase</keyword>
<keyword id="KW-0442">Lipid degradation</keyword>
<keyword id="KW-0443">Lipid metabolism</keyword>
<keyword id="KW-0732">Signal</keyword>
<proteinExistence type="evidence at protein level"/>
<organism>
    <name type="scientific">Diutina rugosa</name>
    <name type="common">Yeast</name>
    <name type="synonym">Candida rugosa</name>
    <dbReference type="NCBI Taxonomy" id="5481"/>
    <lineage>
        <taxon>Eukaryota</taxon>
        <taxon>Fungi</taxon>
        <taxon>Dikarya</taxon>
        <taxon>Ascomycota</taxon>
        <taxon>Saccharomycotina</taxon>
        <taxon>Pichiomycetes</taxon>
        <taxon>Debaryomycetaceae</taxon>
        <taxon>Diutina</taxon>
    </lineage>
</organism>
<protein>
    <recommendedName>
        <fullName>Lipase 2</fullName>
        <ecNumber>3.1.1.3</ecNumber>
    </recommendedName>
</protein>
<evidence type="ECO:0000269" key="1">
    <source>
    </source>
</evidence>
<evidence type="ECO:0000305" key="2"/>
<evidence type="ECO:0007829" key="3">
    <source>
        <dbReference type="PDB" id="1GZ7"/>
    </source>
</evidence>
<comment type="catalytic activity">
    <reaction>
        <text>a triacylglycerol + H2O = a diacylglycerol + a fatty acid + H(+)</text>
        <dbReference type="Rhea" id="RHEA:12044"/>
        <dbReference type="ChEBI" id="CHEBI:15377"/>
        <dbReference type="ChEBI" id="CHEBI:15378"/>
        <dbReference type="ChEBI" id="CHEBI:17855"/>
        <dbReference type="ChEBI" id="CHEBI:18035"/>
        <dbReference type="ChEBI" id="CHEBI:28868"/>
        <dbReference type="EC" id="3.1.1.3"/>
    </reaction>
</comment>
<comment type="similarity">
    <text evidence="2">Belongs to the type-B carboxylesterase/lipase family.</text>
</comment>
<sequence>MKLCLLALGAAVAAAPTATLANGDTITGLNAIVNEKFLGIPFAEPPVGTLRFKPPVPYSASLNGQQFTSYGPSCMQMNPMGSFEDTLPKNARHLVLQSKIFQVVLPNDEDCLTINVIRPPGTRASAGLPVMLWIFGGGFELGGSSLFPGDQMVAKSVLMGKPVIHVSMNYRVASWGFLAGPDIQNEGSGNAGLHDQRLAMQWVADNIAGFGGDPSKVTIYGESAGSMSTFVHLVWNDGDNTYNGKPLFRAAIMQSGCMVPSDPVDGTYGTEIYNQVVASAGCGSASDKLACLRGLSQDTLYQATSDTPGVLAYPSLRLSYLPRPDGTFITDDMYALVRDGKYAHVPVIIGDQNDEGTLFGLSSLNVTTDAQARAYFKQSFIHASDAEIDTLMAAYTSDITQGSPFDTGIFNAITPQFKRISALLGDLAFTLARRYFLNYYQGGTKYSFLSKQLSGLPVLGTFHGNDIIWQDYLVGSGSVIYNNAFIAFANDLDPNKAGLWTNWPTYTSSSQSGNNLMQINGLGLYTGKDNFRPDAYSALFSNPPSFFV</sequence>
<dbReference type="EC" id="3.1.1.3"/>
<dbReference type="EMBL" id="X64704">
    <property type="protein sequence ID" value="CAA45958.1"/>
    <property type="molecule type" value="Genomic_DNA"/>
</dbReference>
<dbReference type="PIR" id="S32615">
    <property type="entry name" value="S32615"/>
</dbReference>
<dbReference type="PDB" id="1GZ7">
    <property type="method" value="X-ray"/>
    <property type="resolution" value="1.97 A"/>
    <property type="chains" value="A/B/C/D=15-548"/>
</dbReference>
<dbReference type="PDBsum" id="1GZ7"/>
<dbReference type="SMR" id="P32946"/>
<dbReference type="ESTHER" id="canru-2lipa">
    <property type="family name" value="Fungal_carboxylesterase_lipase"/>
</dbReference>
<dbReference type="GlyCosmos" id="P32946">
    <property type="glycosylation" value="1 site, No reported glycans"/>
</dbReference>
<dbReference type="iPTMnet" id="P32946"/>
<dbReference type="EvolutionaryTrace" id="P32946"/>
<dbReference type="GO" id="GO:0004806">
    <property type="term" value="F:triacylglycerol lipase activity"/>
    <property type="evidence" value="ECO:0007669"/>
    <property type="project" value="UniProtKB-EC"/>
</dbReference>
<dbReference type="GO" id="GO:0016042">
    <property type="term" value="P:lipid catabolic process"/>
    <property type="evidence" value="ECO:0007669"/>
    <property type="project" value="UniProtKB-KW"/>
</dbReference>
<dbReference type="CDD" id="cd00312">
    <property type="entry name" value="Esterase_lipase"/>
    <property type="match status" value="1"/>
</dbReference>
<dbReference type="Gene3D" id="3.40.50.1820">
    <property type="entry name" value="alpha/beta hydrolase"/>
    <property type="match status" value="1"/>
</dbReference>
<dbReference type="InterPro" id="IPR029058">
    <property type="entry name" value="AB_hydrolase_fold"/>
</dbReference>
<dbReference type="InterPro" id="IPR002018">
    <property type="entry name" value="CarbesteraseB"/>
</dbReference>
<dbReference type="InterPro" id="IPR019826">
    <property type="entry name" value="Carboxylesterase_B_AS"/>
</dbReference>
<dbReference type="InterPro" id="IPR019819">
    <property type="entry name" value="Carboxylesterase_B_CS"/>
</dbReference>
<dbReference type="InterPro" id="IPR050309">
    <property type="entry name" value="Type-B_Carboxylest/Lipase"/>
</dbReference>
<dbReference type="PANTHER" id="PTHR11559">
    <property type="entry name" value="CARBOXYLESTERASE"/>
    <property type="match status" value="1"/>
</dbReference>
<dbReference type="Pfam" id="PF00135">
    <property type="entry name" value="COesterase"/>
    <property type="match status" value="1"/>
</dbReference>
<dbReference type="SUPFAM" id="SSF53474">
    <property type="entry name" value="alpha/beta-Hydrolases"/>
    <property type="match status" value="1"/>
</dbReference>
<dbReference type="PROSITE" id="PS00122">
    <property type="entry name" value="CARBOXYLESTERASE_B_1"/>
    <property type="match status" value="1"/>
</dbReference>
<dbReference type="PROSITE" id="PS00941">
    <property type="entry name" value="CARBOXYLESTERASE_B_2"/>
    <property type="match status" value="1"/>
</dbReference>
<feature type="signal peptide">
    <location>
        <begin position="1"/>
        <end position="14"/>
    </location>
</feature>
<feature type="chain" id="PRO_0000008620" description="Lipase 2">
    <location>
        <begin position="15"/>
        <end position="548"/>
    </location>
</feature>
<feature type="active site" description="Acyl-ester intermediate">
    <location>
        <position position="223"/>
    </location>
</feature>
<feature type="active site" description="Charge relay system">
    <location>
        <position position="355"/>
    </location>
</feature>
<feature type="active site" description="Charge relay system">
    <location>
        <position position="463"/>
    </location>
</feature>
<feature type="glycosylation site" description="N-linked (GlcNAc...) asparagine" evidence="1">
    <location>
        <position position="365"/>
    </location>
</feature>
<feature type="disulfide bond" evidence="1">
    <location>
        <begin position="74"/>
        <end position="111"/>
    </location>
</feature>
<feature type="disulfide bond" evidence="1">
    <location>
        <begin position="282"/>
        <end position="291"/>
    </location>
</feature>
<feature type="strand" evidence="3">
    <location>
        <begin position="17"/>
        <end position="19"/>
    </location>
</feature>
<feature type="strand" evidence="3">
    <location>
        <begin position="25"/>
        <end position="27"/>
    </location>
</feature>
<feature type="strand" evidence="3">
    <location>
        <begin position="32"/>
        <end position="41"/>
    </location>
</feature>
<feature type="helix" evidence="3">
    <location>
        <begin position="48"/>
        <end position="50"/>
    </location>
</feature>
<feature type="helix" evidence="3">
    <location>
        <begin position="83"/>
        <end position="85"/>
    </location>
</feature>
<feature type="helix" evidence="3">
    <location>
        <begin position="89"/>
        <end position="98"/>
    </location>
</feature>
<feature type="turn" evidence="3">
    <location>
        <begin position="99"/>
        <end position="101"/>
    </location>
</feature>
<feature type="strand" evidence="3">
    <location>
        <begin position="105"/>
        <end position="107"/>
    </location>
</feature>
<feature type="strand" evidence="3">
    <location>
        <begin position="113"/>
        <end position="118"/>
    </location>
</feature>
<feature type="strand" evidence="3">
    <location>
        <begin position="128"/>
        <end position="134"/>
    </location>
</feature>
<feature type="turn" evidence="3">
    <location>
        <begin position="138"/>
        <end position="140"/>
    </location>
</feature>
<feature type="helix" evidence="3">
    <location>
        <begin position="150"/>
        <end position="158"/>
    </location>
</feature>
<feature type="strand" evidence="3">
    <location>
        <begin position="164"/>
        <end position="168"/>
    </location>
</feature>
<feature type="helix" evidence="3">
    <location>
        <begin position="173"/>
        <end position="177"/>
    </location>
</feature>
<feature type="helix" evidence="3">
    <location>
        <begin position="181"/>
        <end position="186"/>
    </location>
</feature>
<feature type="helix" evidence="3">
    <location>
        <begin position="191"/>
        <end position="206"/>
    </location>
</feature>
<feature type="helix" evidence="3">
    <location>
        <begin position="207"/>
        <end position="210"/>
    </location>
</feature>
<feature type="strand" evidence="3">
    <location>
        <begin position="212"/>
        <end position="222"/>
    </location>
</feature>
<feature type="helix" evidence="3">
    <location>
        <begin position="224"/>
        <end position="234"/>
    </location>
</feature>
<feature type="helix" evidence="3">
    <location>
        <begin position="235"/>
        <end position="238"/>
    </location>
</feature>
<feature type="strand" evidence="3">
    <location>
        <begin position="245"/>
        <end position="247"/>
    </location>
</feature>
<feature type="strand" evidence="3">
    <location>
        <begin position="249"/>
        <end position="255"/>
    </location>
</feature>
<feature type="helix" evidence="3">
    <location>
        <begin position="267"/>
        <end position="279"/>
    </location>
</feature>
<feature type="helix" evidence="3">
    <location>
        <begin position="288"/>
        <end position="293"/>
    </location>
</feature>
<feature type="helix" evidence="3">
    <location>
        <begin position="297"/>
        <end position="304"/>
    </location>
</feature>
<feature type="turn" evidence="3">
    <location>
        <begin position="313"/>
        <end position="316"/>
    </location>
</feature>
<feature type="strand" evidence="3">
    <location>
        <begin position="326"/>
        <end position="329"/>
    </location>
</feature>
<feature type="helix" evidence="3">
    <location>
        <begin position="333"/>
        <end position="338"/>
    </location>
</feature>
<feature type="strand" evidence="3">
    <location>
        <begin position="347"/>
        <end position="352"/>
    </location>
</feature>
<feature type="helix" evidence="3">
    <location>
        <begin position="357"/>
        <end position="360"/>
    </location>
</feature>
<feature type="helix" evidence="3">
    <location>
        <begin position="361"/>
        <end position="363"/>
    </location>
</feature>
<feature type="helix" evidence="3">
    <location>
        <begin position="369"/>
        <end position="379"/>
    </location>
</feature>
<feature type="helix" evidence="3">
    <location>
        <begin position="385"/>
        <end position="394"/>
    </location>
</feature>
<feature type="helix" evidence="3">
    <location>
        <begin position="399"/>
        <end position="401"/>
    </location>
</feature>
<feature type="strand" evidence="3">
    <location>
        <begin position="402"/>
        <end position="404"/>
    </location>
</feature>
<feature type="turn" evidence="3">
    <location>
        <begin position="408"/>
        <end position="411"/>
    </location>
</feature>
<feature type="helix" evidence="3">
    <location>
        <begin position="417"/>
        <end position="428"/>
    </location>
</feature>
<feature type="helix" evidence="3">
    <location>
        <begin position="430"/>
        <end position="439"/>
    </location>
</feature>
<feature type="strand" evidence="3">
    <location>
        <begin position="445"/>
        <end position="450"/>
    </location>
</feature>
<feature type="turn" evidence="3">
    <location>
        <begin position="452"/>
        <end position="455"/>
    </location>
</feature>
<feature type="turn" evidence="3">
    <location>
        <begin position="457"/>
        <end position="459"/>
    </location>
</feature>
<feature type="strand" evidence="3">
    <location>
        <begin position="460"/>
        <end position="462"/>
    </location>
</feature>
<feature type="helix" evidence="3">
    <location>
        <begin position="465"/>
        <end position="471"/>
    </location>
</feature>
<feature type="helix" evidence="3">
    <location>
        <begin position="478"/>
        <end position="481"/>
    </location>
</feature>
<feature type="helix" evidence="3">
    <location>
        <begin position="483"/>
        <end position="491"/>
    </location>
</feature>
<feature type="helix" evidence="3">
    <location>
        <begin position="494"/>
        <end position="497"/>
    </location>
</feature>
<feature type="strand" evidence="3">
    <location>
        <begin position="511"/>
        <end position="513"/>
    </location>
</feature>
<feature type="strand" evidence="3">
    <location>
        <begin position="516"/>
        <end position="519"/>
    </location>
</feature>
<feature type="strand" evidence="3">
    <location>
        <begin position="524"/>
        <end position="527"/>
    </location>
</feature>
<feature type="helix" evidence="3">
    <location>
        <begin position="533"/>
        <end position="540"/>
    </location>
</feature>
<feature type="helix" evidence="3">
    <location>
        <begin position="543"/>
        <end position="546"/>
    </location>
</feature>
<reference key="1">
    <citation type="journal article" date="1992" name="Biochim. Biophys. Acta">
        <title>Cloning and nucleotide sequences of two lipase genes from Candida cylindracea.</title>
        <authorList>
            <person name="Longhi S."/>
            <person name="Fusetti F."/>
            <person name="Grandori R."/>
            <person name="Lotti M."/>
            <person name="Vanoni M."/>
            <person name="Alberghina L."/>
        </authorList>
    </citation>
    <scope>NUCLEOTIDE SEQUENCE [GENOMIC DNA]</scope>
    <source>
        <strain>ATCC 14830 / CBS 6330 / DSM 2031 / MS-5 / NRRL Y-17506</strain>
    </source>
</reference>
<reference key="2">
    <citation type="journal article" date="1998" name="Yeast">
        <title>Candida rugosa lipases: molecular biology and versatility in biotechnology.</title>
        <authorList>
            <person name="Benjamin S."/>
            <person name="Pandey A."/>
        </authorList>
    </citation>
    <scope>REVIEW</scope>
</reference>
<reference key="3">
    <citation type="journal article" date="2003" name="J. Mol. Biol.">
        <title>Structural insights into the lipase/esterase behavior in the Candida rugosa lipases family: crystal structure of the lipase 2 isoenzyme at 1.97A resolution.</title>
        <authorList>
            <person name="Mancheno J.M."/>
            <person name="Pernas M.A."/>
            <person name="Martinez M.J."/>
            <person name="Ochoa B."/>
            <person name="Rua M.L."/>
            <person name="Hermoso J.A."/>
        </authorList>
    </citation>
    <scope>X-RAY CRYSTALLOGRAPHY (1.97 ANGSTROMS) OF 15-548</scope>
    <scope>DISULFIDE BONDS</scope>
    <scope>GLYCOSYLATION AT ASN-365</scope>
</reference>
<name>LIP2_DIURU</name>
<accession>P32946</accession>